<feature type="chain" id="PRO_0000226935" description="Uncharacterized protein ycf68">
    <location>
        <begin position="1"/>
        <end position="134"/>
    </location>
</feature>
<proteinExistence type="inferred from homology"/>
<dbReference type="EMBL" id="AP006714">
    <property type="protein sequence ID" value="BAD27351.1"/>
    <property type="molecule type" value="Genomic_DNA"/>
</dbReference>
<dbReference type="EMBL" id="AP006714">
    <property type="protein sequence ID" value="BAD27370.1"/>
    <property type="molecule type" value="Genomic_DNA"/>
</dbReference>
<dbReference type="GO" id="GO:0009507">
    <property type="term" value="C:chloroplast"/>
    <property type="evidence" value="ECO:0007669"/>
    <property type="project" value="UniProtKB-SubCell"/>
</dbReference>
<dbReference type="InterPro" id="IPR022546">
    <property type="entry name" value="Uncharacterised_Ycf68"/>
</dbReference>
<dbReference type="PANTHER" id="PTHR34890">
    <property type="entry name" value="ORF16-LACZ FUSION PROTEIN-RELATED"/>
    <property type="match status" value="1"/>
</dbReference>
<dbReference type="Pfam" id="PF10839">
    <property type="entry name" value="DUF2647"/>
    <property type="match status" value="1"/>
</dbReference>
<name>YCF68_SACOF</name>
<accession>Q6ENQ5</accession>
<organism>
    <name type="scientific">Saccharum officinarum</name>
    <name type="common">Sugarcane</name>
    <dbReference type="NCBI Taxonomy" id="4547"/>
    <lineage>
        <taxon>Eukaryota</taxon>
        <taxon>Viridiplantae</taxon>
        <taxon>Streptophyta</taxon>
        <taxon>Embryophyta</taxon>
        <taxon>Tracheophyta</taxon>
        <taxon>Spermatophyta</taxon>
        <taxon>Magnoliopsida</taxon>
        <taxon>Liliopsida</taxon>
        <taxon>Poales</taxon>
        <taxon>Poaceae</taxon>
        <taxon>PACMAD clade</taxon>
        <taxon>Panicoideae</taxon>
        <taxon>Andropogonodae</taxon>
        <taxon>Andropogoneae</taxon>
        <taxon>Saccharinae</taxon>
        <taxon>Saccharum</taxon>
        <taxon>Saccharum officinarum species complex</taxon>
    </lineage>
</organism>
<geneLocation type="chloroplast"/>
<comment type="subcellular location">
    <subcellularLocation>
        <location>Plastid</location>
        <location>Chloroplast</location>
    </subcellularLocation>
</comment>
<comment type="similarity">
    <text evidence="1">Belongs to the ycf68 family.</text>
</comment>
<evidence type="ECO:0000305" key="1"/>
<protein>
    <recommendedName>
        <fullName>Uncharacterized protein ycf68</fullName>
    </recommendedName>
    <alternativeName>
        <fullName>ORF 134</fullName>
    </alternativeName>
</protein>
<sequence>MAYSSCLNRSLKPNKLLLRRIDGAIQVRSHVDRTFYSLVGSGRSGGGPPRLLSSRESIHPLSVYGELSLEHRLRFVLNGKMEHLTTHLHRPRTTRSPLSFWGDGGIVPFEPFFHAFPGGLEKAVINRTSLILPS</sequence>
<reference key="1">
    <citation type="journal article" date="2004" name="DNA Res.">
        <title>Complete nucleotide sequence of the sugarcane (Saccharum officinarum) chloroplast genome: a comparative analysis of four monocot chloroplast genomes.</title>
        <authorList>
            <person name="Asano T."/>
            <person name="Tsudzuki T."/>
            <person name="Takahashi S."/>
            <person name="Shimada H."/>
            <person name="Kadowaki K."/>
        </authorList>
    </citation>
    <scope>NUCLEOTIDE SEQUENCE [LARGE SCALE GENOMIC DNA]</scope>
</reference>
<keyword id="KW-0150">Chloroplast</keyword>
<keyword id="KW-0934">Plastid</keyword>
<gene>
    <name type="primary">ycf68-1</name>
</gene>
<gene>
    <name type="primary">ycf68-2</name>
</gene>